<gene>
    <name evidence="1" type="primary">fabA</name>
    <name type="ordered locus">Shal_2348</name>
</gene>
<reference key="1">
    <citation type="submission" date="2008-01" db="EMBL/GenBank/DDBJ databases">
        <title>Complete sequence of Shewanella halifaxensis HAW-EB4.</title>
        <authorList>
            <consortium name="US DOE Joint Genome Institute"/>
            <person name="Copeland A."/>
            <person name="Lucas S."/>
            <person name="Lapidus A."/>
            <person name="Glavina del Rio T."/>
            <person name="Dalin E."/>
            <person name="Tice H."/>
            <person name="Bruce D."/>
            <person name="Goodwin L."/>
            <person name="Pitluck S."/>
            <person name="Sims D."/>
            <person name="Brettin T."/>
            <person name="Detter J.C."/>
            <person name="Han C."/>
            <person name="Kuske C.R."/>
            <person name="Schmutz J."/>
            <person name="Larimer F."/>
            <person name="Land M."/>
            <person name="Hauser L."/>
            <person name="Kyrpides N."/>
            <person name="Kim E."/>
            <person name="Zhao J.-S."/>
            <person name="Richardson P."/>
        </authorList>
    </citation>
    <scope>NUCLEOTIDE SEQUENCE [LARGE SCALE GENOMIC DNA]</scope>
    <source>
        <strain>HAW-EB4</strain>
    </source>
</reference>
<protein>
    <recommendedName>
        <fullName evidence="1">3-hydroxydecanoyl-[acyl-carrier-protein] dehydratase</fullName>
        <ecNumber evidence="1">4.2.1.59</ecNumber>
    </recommendedName>
    <alternativeName>
        <fullName evidence="1">3-hydroxyacyl-[acyl-carrier-protein] dehydratase FabA</fullName>
    </alternativeName>
    <alternativeName>
        <fullName evidence="1">Beta-hydroxydecanoyl thioester dehydrase</fullName>
    </alternativeName>
    <alternativeName>
        <fullName evidence="1">Trans-2-decenoyl-[acyl-carrier-protein] isomerase</fullName>
        <ecNumber evidence="1">5.3.3.14</ecNumber>
    </alternativeName>
</protein>
<accession>B0TIX2</accession>
<comment type="function">
    <text evidence="1">Necessary for the introduction of cis unsaturation into fatty acids. Catalyzes the dehydration of (3R)-3-hydroxydecanoyl-ACP to E-(2)-decenoyl-ACP and then its isomerization to Z-(3)-decenoyl-ACP. Can catalyze the dehydratase reaction for beta-hydroxyacyl-ACPs with saturated chain lengths up to 16:0, being most active on intermediate chain length.</text>
</comment>
<comment type="catalytic activity">
    <reaction evidence="1">
        <text>a (3R)-hydroxyacyl-[ACP] = a (2E)-enoyl-[ACP] + H2O</text>
        <dbReference type="Rhea" id="RHEA:13097"/>
        <dbReference type="Rhea" id="RHEA-COMP:9925"/>
        <dbReference type="Rhea" id="RHEA-COMP:9945"/>
        <dbReference type="ChEBI" id="CHEBI:15377"/>
        <dbReference type="ChEBI" id="CHEBI:78784"/>
        <dbReference type="ChEBI" id="CHEBI:78827"/>
        <dbReference type="EC" id="4.2.1.59"/>
    </reaction>
</comment>
<comment type="catalytic activity">
    <reaction evidence="1">
        <text>(3R)-hydroxydecanoyl-[ACP] = (2E)-decenoyl-[ACP] + H2O</text>
        <dbReference type="Rhea" id="RHEA:41860"/>
        <dbReference type="Rhea" id="RHEA-COMP:9638"/>
        <dbReference type="Rhea" id="RHEA-COMP:9639"/>
        <dbReference type="ChEBI" id="CHEBI:15377"/>
        <dbReference type="ChEBI" id="CHEBI:78466"/>
        <dbReference type="ChEBI" id="CHEBI:78467"/>
    </reaction>
</comment>
<comment type="catalytic activity">
    <reaction evidence="1">
        <text>(2E)-decenoyl-[ACP] = (3Z)-decenoyl-[ACP]</text>
        <dbReference type="Rhea" id="RHEA:23568"/>
        <dbReference type="Rhea" id="RHEA-COMP:9639"/>
        <dbReference type="Rhea" id="RHEA-COMP:9927"/>
        <dbReference type="ChEBI" id="CHEBI:78467"/>
        <dbReference type="ChEBI" id="CHEBI:78798"/>
        <dbReference type="EC" id="5.3.3.14"/>
    </reaction>
</comment>
<comment type="pathway">
    <text evidence="1">Lipid metabolism; fatty acid biosynthesis.</text>
</comment>
<comment type="subunit">
    <text evidence="1">Homodimer.</text>
</comment>
<comment type="subcellular location">
    <subcellularLocation>
        <location evidence="1">Cytoplasm</location>
    </subcellularLocation>
</comment>
<comment type="similarity">
    <text evidence="1">Belongs to the thioester dehydratase family. FabA subfamily.</text>
</comment>
<evidence type="ECO:0000255" key="1">
    <source>
        <dbReference type="HAMAP-Rule" id="MF_00405"/>
    </source>
</evidence>
<feature type="chain" id="PRO_1000201212" description="3-hydroxydecanoyl-[acyl-carrier-protein] dehydratase">
    <location>
        <begin position="1"/>
        <end position="171"/>
    </location>
</feature>
<feature type="active site" evidence="1">
    <location>
        <position position="70"/>
    </location>
</feature>
<proteinExistence type="inferred from homology"/>
<sequence length="171" mass="18761">MSNANSFTKEDLIACGLGKLFGPNSPRLPKDNMLMIDRVLKINGDGGEYGKGEIVAELDINPELWFFDCHFAGDPVMPGCLGLDAMWQLVGFFLGWEGAEGKGRALGVGEVKFTGQVLPEAKKVTYKLTIKRKVYRKLVMGIADATMEVDGREIYSAKDLKVGIFTDTTSF</sequence>
<name>FABA_SHEHH</name>
<organism>
    <name type="scientific">Shewanella halifaxensis (strain HAW-EB4)</name>
    <dbReference type="NCBI Taxonomy" id="458817"/>
    <lineage>
        <taxon>Bacteria</taxon>
        <taxon>Pseudomonadati</taxon>
        <taxon>Pseudomonadota</taxon>
        <taxon>Gammaproteobacteria</taxon>
        <taxon>Alteromonadales</taxon>
        <taxon>Shewanellaceae</taxon>
        <taxon>Shewanella</taxon>
    </lineage>
</organism>
<dbReference type="EC" id="4.2.1.59" evidence="1"/>
<dbReference type="EC" id="5.3.3.14" evidence="1"/>
<dbReference type="EMBL" id="CP000931">
    <property type="protein sequence ID" value="ABZ76907.1"/>
    <property type="molecule type" value="Genomic_DNA"/>
</dbReference>
<dbReference type="RefSeq" id="WP_012277436.1">
    <property type="nucleotide sequence ID" value="NC_010334.1"/>
</dbReference>
<dbReference type="SMR" id="B0TIX2"/>
<dbReference type="STRING" id="458817.Shal_2348"/>
<dbReference type="KEGG" id="shl:Shal_2348"/>
<dbReference type="eggNOG" id="COG0764">
    <property type="taxonomic scope" value="Bacteria"/>
</dbReference>
<dbReference type="HOGENOM" id="CLU_097925_0_0_6"/>
<dbReference type="OrthoDB" id="9786735at2"/>
<dbReference type="UniPathway" id="UPA00094"/>
<dbReference type="Proteomes" id="UP000001317">
    <property type="component" value="Chromosome"/>
</dbReference>
<dbReference type="GO" id="GO:0005737">
    <property type="term" value="C:cytoplasm"/>
    <property type="evidence" value="ECO:0007669"/>
    <property type="project" value="UniProtKB-SubCell"/>
</dbReference>
<dbReference type="GO" id="GO:0019171">
    <property type="term" value="F:(3R)-hydroxyacyl-[acyl-carrier-protein] dehydratase activity"/>
    <property type="evidence" value="ECO:0007669"/>
    <property type="project" value="UniProtKB-UniRule"/>
</dbReference>
<dbReference type="GO" id="GO:0034017">
    <property type="term" value="F:trans-2-decenoyl-acyl-carrier-protein isomerase activity"/>
    <property type="evidence" value="ECO:0007669"/>
    <property type="project" value="UniProtKB-UniRule"/>
</dbReference>
<dbReference type="GO" id="GO:0006636">
    <property type="term" value="P:unsaturated fatty acid biosynthetic process"/>
    <property type="evidence" value="ECO:0007669"/>
    <property type="project" value="UniProtKB-UniRule"/>
</dbReference>
<dbReference type="CDD" id="cd01287">
    <property type="entry name" value="FabA"/>
    <property type="match status" value="1"/>
</dbReference>
<dbReference type="Gene3D" id="3.10.129.10">
    <property type="entry name" value="Hotdog Thioesterase"/>
    <property type="match status" value="1"/>
</dbReference>
<dbReference type="HAMAP" id="MF_00405">
    <property type="entry name" value="FabA"/>
    <property type="match status" value="1"/>
</dbReference>
<dbReference type="InterPro" id="IPR010083">
    <property type="entry name" value="FabA"/>
</dbReference>
<dbReference type="InterPro" id="IPR013114">
    <property type="entry name" value="FabA_FabZ"/>
</dbReference>
<dbReference type="InterPro" id="IPR029069">
    <property type="entry name" value="HotDog_dom_sf"/>
</dbReference>
<dbReference type="NCBIfam" id="TIGR01749">
    <property type="entry name" value="fabA"/>
    <property type="match status" value="1"/>
</dbReference>
<dbReference type="NCBIfam" id="NF003509">
    <property type="entry name" value="PRK05174.1"/>
    <property type="match status" value="1"/>
</dbReference>
<dbReference type="PANTHER" id="PTHR30272">
    <property type="entry name" value="3-HYDROXYACYL-[ACYL-CARRIER-PROTEIN] DEHYDRATASE"/>
    <property type="match status" value="1"/>
</dbReference>
<dbReference type="PANTHER" id="PTHR30272:SF8">
    <property type="entry name" value="3-HYDROXYDECANOYL-[ACYL-CARRIER-PROTEIN] DEHYDRATASE"/>
    <property type="match status" value="1"/>
</dbReference>
<dbReference type="Pfam" id="PF07977">
    <property type="entry name" value="FabA"/>
    <property type="match status" value="1"/>
</dbReference>
<dbReference type="SUPFAM" id="SSF54637">
    <property type="entry name" value="Thioesterase/thiol ester dehydrase-isomerase"/>
    <property type="match status" value="1"/>
</dbReference>
<keyword id="KW-0963">Cytoplasm</keyword>
<keyword id="KW-0275">Fatty acid biosynthesis</keyword>
<keyword id="KW-0276">Fatty acid metabolism</keyword>
<keyword id="KW-0413">Isomerase</keyword>
<keyword id="KW-0444">Lipid biosynthesis</keyword>
<keyword id="KW-0443">Lipid metabolism</keyword>
<keyword id="KW-0456">Lyase</keyword>